<protein>
    <recommendedName>
        <fullName>Mediator of RNA polymerase II transcription subunit 12</fullName>
    </recommendedName>
    <alternativeName>
        <fullName>Mediator complex subunit 12</fullName>
    </alternativeName>
</protein>
<sequence>MTSRPALGTHGSGAPSRNQVRRPSKPANALPPDCIDPTLEDERPAAHNGASEARPPPRGRPHIFYSTLASSAFDLPIHSFPYQPTVNLPVPPRPGSLHLRDASQQRQILPGGTGVKDAPKLGVPETVPIPVHFPGEKAADVFPWTGTNAEDTLSEALVKAGVSNKPQIMNETNTARPSLWSNLKNKSGITTLSTLFVAVLEKRQQNGRLQTPNTFKPPPRLTLRDSTREGWLHDLANPTVSLRRLSRTIPHGLTGKVLLDQCLNKNIPLPRALWLAKCVGINELRAHKRKGQAGTVTWGRGWTSSVEQFLDSVISTIGQGDWKLRITYALQLATHLYKEHLLDDDHFLGWIPFGLDMCSSERLFIWLLVVAVPHYWNDISSCRQRGKRLAESLLNHLAKLSPIEDLAAPSTALQFLENSLLKLVTTRPACLLLPISWPKHSAALKALVTKRNLPQTAQAVEKLDGRNTRLLSFVRNGKSSSRTGAARVFHKLDSINYAAPIRIEDLSYECMEITSNAVQLISTLLHWACSCYRAGSHRIYLATRLLRRWSHLGADVYEGIIVYLQSMSWVKSGEIHVLLRIVAELVRSKHFSVGRYLQWLIATGSLGCDASLSLPSSWPVRLITEVPLTGLSDQVRTLRSTLLRGTAHSTELEEQALVNVKQSISQAVPAIFGLSLTIPSRIELNFAKLSGTIRLEIGIWLRQQVAQHAEVNEQSYLEQCEDLAILADVIGITASSLDMAVLASVADTLLYHMKTFRAIGAFDPLLGRLAMRYAAIRTVKFPERELLLSFQNLARTAQPDGQLLQLLAYDLSRLDQKNAVAACSPASDNMGEVMQHAGTCSDDEIERILSSGTSMDQNMMSRVLRKLVRNLEEHVDKGYRQFENHPAWFWRLRNFDEATFDVVLREWLETSIMACQLHILQIAIPPLVASSCMELSSFLDILRSCLANAKATQVLEPATIAIDLLRLLLPSGLSAMSCSSQDAYRYRTEQYKLCFTSDTRIIHCIGEVADLVLSTPSNSMLQTVSSLLSSETVLSIVKEHVVSDPDCLSKMKTGQSGQASFNTCFKTLLNGLLDPSGQWCLADISPEEQIIAVFKAASELSLPLCQAMIEHIFASSSALDTHAVDRLSVTVLNAVRTSMEKDQSQGLELLTNLEGPLADKIRSHAEREVLDASYFLLRGSTDGIASDCIVTAKMMQKYLTVIELTMGETPQADEQFAMLAALTDRFKGIFHALSECGGLGTPTNQATASPVVQVLAALLSLVASHGPQLLRNATQSHQAALMVALQDIVTHASLELFPSIIEHVFDVLIVLSDHISEDVRNQIARLESAKSTNSDRAYFIHSQKAPIDGWLMLTKPVIPPLEPPQPPNPNTTQNQSSPYQSPQMTSNTAAPQHRYFNQQQQQSQTLQPSQQTQHMRTYPQYAQHAAQPNRHLPAQLQRTPSHHASLSPLQQMQHMQQLQGLAQQRASQPSPIHSQRPTSVASPGGMGGLAGGNAAPSKAHTSYVNQQRDTQQYPFVQPRWEILAESSGNPTLNETAISLSLFGARRV</sequence>
<evidence type="ECO:0000250" key="1"/>
<evidence type="ECO:0000256" key="2">
    <source>
        <dbReference type="SAM" id="MobiDB-lite"/>
    </source>
</evidence>
<evidence type="ECO:0000305" key="3"/>
<feature type="chain" id="PRO_0000312976" description="Mediator of RNA polymerase II transcription subunit 12">
    <location>
        <begin position="1"/>
        <end position="1547"/>
    </location>
</feature>
<feature type="region of interest" description="Disordered" evidence="2">
    <location>
        <begin position="1"/>
        <end position="63"/>
    </location>
</feature>
<feature type="region of interest" description="Disordered" evidence="2">
    <location>
        <begin position="1356"/>
        <end position="1509"/>
    </location>
</feature>
<feature type="compositionally biased region" description="Pro residues" evidence="2">
    <location>
        <begin position="1357"/>
        <end position="1369"/>
    </location>
</feature>
<feature type="compositionally biased region" description="Polar residues" evidence="2">
    <location>
        <begin position="1379"/>
        <end position="1390"/>
    </location>
</feature>
<feature type="compositionally biased region" description="Low complexity" evidence="2">
    <location>
        <begin position="1398"/>
        <end position="1413"/>
    </location>
</feature>
<feature type="compositionally biased region" description="Low complexity" evidence="2">
    <location>
        <begin position="1446"/>
        <end position="1468"/>
    </location>
</feature>
<feature type="compositionally biased region" description="Polar residues" evidence="2">
    <location>
        <begin position="1469"/>
        <end position="1480"/>
    </location>
</feature>
<feature type="compositionally biased region" description="Polar residues" evidence="2">
    <location>
        <begin position="1499"/>
        <end position="1509"/>
    </location>
</feature>
<accession>Q0V6H6</accession>
<dbReference type="EMBL" id="CH445325">
    <property type="protein sequence ID" value="EAT91883.2"/>
    <property type="status" value="ALT_SEQ"/>
    <property type="molecule type" value="Genomic_DNA"/>
</dbReference>
<dbReference type="RefSeq" id="XP_001791074.1">
    <property type="nucleotide sequence ID" value="XM_001791022.1"/>
</dbReference>
<dbReference type="STRING" id="321614.Q0V6H6"/>
<dbReference type="GeneID" id="5968362"/>
<dbReference type="KEGG" id="pno:SNOG_00388"/>
<dbReference type="VEuPathDB" id="FungiDB:JI435_003880"/>
<dbReference type="eggNOG" id="KOG4522">
    <property type="taxonomic scope" value="Eukaryota"/>
</dbReference>
<dbReference type="InParanoid" id="Q0V6H6"/>
<dbReference type="OMA" id="YPVRPWE"/>
<dbReference type="Proteomes" id="UP000001055">
    <property type="component" value="Unassembled WGS sequence"/>
</dbReference>
<dbReference type="GO" id="GO:0016592">
    <property type="term" value="C:mediator complex"/>
    <property type="evidence" value="ECO:0000318"/>
    <property type="project" value="GO_Central"/>
</dbReference>
<dbReference type="GO" id="GO:0003713">
    <property type="term" value="F:transcription coactivator activity"/>
    <property type="evidence" value="ECO:0000318"/>
    <property type="project" value="GO_Central"/>
</dbReference>
<dbReference type="GO" id="GO:0045944">
    <property type="term" value="P:positive regulation of transcription by RNA polymerase II"/>
    <property type="evidence" value="ECO:0000318"/>
    <property type="project" value="GO_Central"/>
</dbReference>
<dbReference type="InterPro" id="IPR016024">
    <property type="entry name" value="ARM-type_fold"/>
</dbReference>
<dbReference type="InterPro" id="IPR019035">
    <property type="entry name" value="Mediator_Med12"/>
</dbReference>
<dbReference type="PANTHER" id="PTHR46567">
    <property type="entry name" value="MEDIATOR OF RNA POLYMERASE II TRANSCRIPTION SUBUNIT 12"/>
    <property type="match status" value="1"/>
</dbReference>
<dbReference type="PANTHER" id="PTHR46567:SF1">
    <property type="entry name" value="MEDIATOR OF RNA POLYMERASE II TRANSCRIPTION SUBUNIT 12"/>
    <property type="match status" value="1"/>
</dbReference>
<dbReference type="Pfam" id="PF25326">
    <property type="entry name" value="ARM_SRB8"/>
    <property type="match status" value="1"/>
</dbReference>
<dbReference type="Pfam" id="PF09497">
    <property type="entry name" value="Med12"/>
    <property type="match status" value="1"/>
</dbReference>
<dbReference type="SMART" id="SM01281">
    <property type="entry name" value="Med12"/>
    <property type="match status" value="1"/>
</dbReference>
<dbReference type="SUPFAM" id="SSF48371">
    <property type="entry name" value="ARM repeat"/>
    <property type="match status" value="1"/>
</dbReference>
<gene>
    <name type="primary">SRB8</name>
    <name type="synonym">MED12</name>
    <name type="ORF">SNOG_00388</name>
</gene>
<proteinExistence type="inferred from homology"/>
<comment type="function">
    <text evidence="1">Component of the SRB8-11 complex. The SRB8-11 complex is a regulatory module of the Mediator complex which is itself involved in regulation of basal and activated RNA polymerase II-dependent transcription. The SRB8-11 complex may be involved in the transcriptional repression of a subset of genes regulated by Mediator. It may inhibit the association of the Mediator complex with RNA polymerase II to form the holoenzyme complex (By similarity).</text>
</comment>
<comment type="subunit">
    <text evidence="1">Component of the SRB8-11 complex, which itself associates with the Mediator complex.</text>
</comment>
<comment type="subcellular location">
    <subcellularLocation>
        <location evidence="3">Nucleus</location>
    </subcellularLocation>
</comment>
<comment type="similarity">
    <text evidence="3">Belongs to the Mediator complex subunit 12 family.</text>
</comment>
<comment type="sequence caution" evidence="3">
    <conflict type="erroneous gene model prediction">
        <sequence resource="EMBL-CDS" id="EAT91883"/>
    </conflict>
</comment>
<keyword id="KW-0010">Activator</keyword>
<keyword id="KW-0539">Nucleus</keyword>
<keyword id="KW-0678">Repressor</keyword>
<keyword id="KW-0804">Transcription</keyword>
<keyword id="KW-0805">Transcription regulation</keyword>
<organism>
    <name type="scientific">Phaeosphaeria nodorum (strain SN15 / ATCC MYA-4574 / FGSC 10173)</name>
    <name type="common">Glume blotch fungus</name>
    <name type="synonym">Parastagonospora nodorum</name>
    <dbReference type="NCBI Taxonomy" id="321614"/>
    <lineage>
        <taxon>Eukaryota</taxon>
        <taxon>Fungi</taxon>
        <taxon>Dikarya</taxon>
        <taxon>Ascomycota</taxon>
        <taxon>Pezizomycotina</taxon>
        <taxon>Dothideomycetes</taxon>
        <taxon>Pleosporomycetidae</taxon>
        <taxon>Pleosporales</taxon>
        <taxon>Pleosporineae</taxon>
        <taxon>Phaeosphaeriaceae</taxon>
        <taxon>Parastagonospora</taxon>
    </lineage>
</organism>
<name>SRB8_PHANO</name>
<reference key="1">
    <citation type="journal article" date="2007" name="Plant Cell">
        <title>Dothideomycete-plant interactions illuminated by genome sequencing and EST analysis of the wheat pathogen Stagonospora nodorum.</title>
        <authorList>
            <person name="Hane J.K."/>
            <person name="Lowe R.G.T."/>
            <person name="Solomon P.S."/>
            <person name="Tan K.-C."/>
            <person name="Schoch C.L."/>
            <person name="Spatafora J.W."/>
            <person name="Crous P.W."/>
            <person name="Kodira C.D."/>
            <person name="Birren B.W."/>
            <person name="Galagan J.E."/>
            <person name="Torriani S.F.F."/>
            <person name="McDonald B.A."/>
            <person name="Oliver R.P."/>
        </authorList>
    </citation>
    <scope>NUCLEOTIDE SEQUENCE [LARGE SCALE GENOMIC DNA]</scope>
    <source>
        <strain>SN15 / ATCC MYA-4574 / FGSC 10173</strain>
    </source>
</reference>